<reference key="1">
    <citation type="submission" date="2006-11" db="EMBL/GenBank/DDBJ databases">
        <title>Evolution and sequence variation of human beta-defensin genes.</title>
        <authorList>
            <person name="Hollox E.J."/>
            <person name="Armour J.A.L."/>
        </authorList>
    </citation>
    <scope>NUCLEOTIDE SEQUENCE [GENOMIC DNA]</scope>
</reference>
<accession>A4H213</accession>
<dbReference type="EMBL" id="AM410118">
    <property type="protein sequence ID" value="CAL68933.1"/>
    <property type="molecule type" value="Genomic_DNA"/>
</dbReference>
<dbReference type="SMR" id="A4H213"/>
<dbReference type="GO" id="GO:0005576">
    <property type="term" value="C:extracellular region"/>
    <property type="evidence" value="ECO:0007669"/>
    <property type="project" value="UniProtKB-SubCell"/>
</dbReference>
<dbReference type="GO" id="GO:0016020">
    <property type="term" value="C:membrane"/>
    <property type="evidence" value="ECO:0007669"/>
    <property type="project" value="UniProtKB-SubCell"/>
</dbReference>
<dbReference type="GO" id="GO:0042742">
    <property type="term" value="P:defense response to bacterium"/>
    <property type="evidence" value="ECO:0007669"/>
    <property type="project" value="UniProtKB-KW"/>
</dbReference>
<dbReference type="GO" id="GO:0045087">
    <property type="term" value="P:innate immune response"/>
    <property type="evidence" value="ECO:0007669"/>
    <property type="project" value="InterPro"/>
</dbReference>
<dbReference type="Gene3D" id="3.10.360.10">
    <property type="entry name" value="Antimicrobial Peptide, Beta-defensin 2, Chain A"/>
    <property type="match status" value="1"/>
</dbReference>
<dbReference type="InterPro" id="IPR025933">
    <property type="entry name" value="Beta_defensin_dom"/>
</dbReference>
<dbReference type="Pfam" id="PF13841">
    <property type="entry name" value="Defensin_beta_2"/>
    <property type="match status" value="1"/>
</dbReference>
<name>D106A_HYLLA</name>
<organism>
    <name type="scientific">Hylobates lar</name>
    <name type="common">Lar gibbon</name>
    <name type="synonym">White-handed gibbon</name>
    <dbReference type="NCBI Taxonomy" id="9580"/>
    <lineage>
        <taxon>Eukaryota</taxon>
        <taxon>Metazoa</taxon>
        <taxon>Chordata</taxon>
        <taxon>Craniata</taxon>
        <taxon>Vertebrata</taxon>
        <taxon>Euteleostomi</taxon>
        <taxon>Mammalia</taxon>
        <taxon>Eutheria</taxon>
        <taxon>Euarchontoglires</taxon>
        <taxon>Primates</taxon>
        <taxon>Haplorrhini</taxon>
        <taxon>Catarrhini</taxon>
        <taxon>Hylobatidae</taxon>
        <taxon>Hylobates</taxon>
    </lineage>
</organism>
<proteinExistence type="inferred from homology"/>
<feature type="signal peptide" evidence="2">
    <location>
        <begin position="1"/>
        <end position="20"/>
    </location>
</feature>
<feature type="peptide" id="PRO_0000289816" description="Beta-defensin 106A">
    <location>
        <begin position="21"/>
        <end position="65"/>
    </location>
</feature>
<feature type="disulfide bond" evidence="2">
    <location>
        <begin position="26"/>
        <end position="53"/>
    </location>
</feature>
<feature type="disulfide bond" evidence="1">
    <location>
        <begin position="33"/>
        <end position="47"/>
    </location>
</feature>
<feature type="disulfide bond" evidence="1">
    <location>
        <begin position="37"/>
        <end position="54"/>
    </location>
</feature>
<evidence type="ECO:0000250" key="1"/>
<evidence type="ECO:0000250" key="2">
    <source>
        <dbReference type="UniProtKB" id="Q8N104"/>
    </source>
</evidence>
<evidence type="ECO:0000305" key="3"/>
<protein>
    <recommendedName>
        <fullName>Beta-defensin 106A</fullName>
    </recommendedName>
    <alternativeName>
        <fullName>Defensin, beta 106</fullName>
    </alternativeName>
    <alternativeName>
        <fullName>Defensin, beta 106A</fullName>
    </alternativeName>
</protein>
<comment type="function">
    <text evidence="2">Has antibacterial activity. Acts as a ligand for C-C chemokine receptor CCR2.</text>
</comment>
<comment type="subunit">
    <text evidence="2">Monomer. Interacts with CCR2 (via extracellular N-terminal region); this interaction may preferentially require specific tyrosine sulfation on CCR2.</text>
</comment>
<comment type="subcellular location">
    <subcellularLocation>
        <location evidence="2">Secreted</location>
    </subcellularLocation>
    <subcellularLocation>
        <location evidence="2">Membrane</location>
    </subcellularLocation>
    <text evidence="2">Associates with tumor cell membrane-derived microvesicles.</text>
</comment>
<comment type="similarity">
    <text evidence="3">Belongs to the beta-defensin family.</text>
</comment>
<sequence>MRTFLFLFVVLFFLTPAKNAFFDDKCDKLRGTCKNSCEKNEELTSFCQKSLKCCRTIQTCGNTTD</sequence>
<gene>
    <name type="primary">DEFB106A</name>
    <name type="synonym">DEFB106</name>
</gene>
<keyword id="KW-0044">Antibiotic</keyword>
<keyword id="KW-0929">Antimicrobial</keyword>
<keyword id="KW-0211">Defensin</keyword>
<keyword id="KW-1015">Disulfide bond</keyword>
<keyword id="KW-0472">Membrane</keyword>
<keyword id="KW-0964">Secreted</keyword>
<keyword id="KW-0732">Signal</keyword>